<protein>
    <recommendedName>
        <fullName evidence="1">Adenosine 5'-phosphosulfate reductase</fullName>
        <shortName evidence="1">APS reductase</shortName>
        <ecNumber evidence="1">1.8.4.10</ecNumber>
    </recommendedName>
    <alternativeName>
        <fullName evidence="1">5'-adenylylsulfate reductase</fullName>
    </alternativeName>
    <alternativeName>
        <fullName evidence="1">Thioredoxin-dependent 5'-adenylylsulfate reductase</fullName>
    </alternativeName>
</protein>
<accession>C1A1H0</accession>
<proteinExistence type="inferred from homology"/>
<comment type="function">
    <text evidence="1">Catalyzes the formation of sulfite from adenosine 5'-phosphosulfate (APS) using thioredoxin as an electron donor.</text>
</comment>
<comment type="catalytic activity">
    <reaction evidence="1">
        <text>[thioredoxin]-disulfide + sulfite + AMP + 2 H(+) = adenosine 5'-phosphosulfate + [thioredoxin]-dithiol</text>
        <dbReference type="Rhea" id="RHEA:21976"/>
        <dbReference type="Rhea" id="RHEA-COMP:10698"/>
        <dbReference type="Rhea" id="RHEA-COMP:10700"/>
        <dbReference type="ChEBI" id="CHEBI:15378"/>
        <dbReference type="ChEBI" id="CHEBI:17359"/>
        <dbReference type="ChEBI" id="CHEBI:29950"/>
        <dbReference type="ChEBI" id="CHEBI:50058"/>
        <dbReference type="ChEBI" id="CHEBI:58243"/>
        <dbReference type="ChEBI" id="CHEBI:456215"/>
        <dbReference type="EC" id="1.8.4.10"/>
    </reaction>
</comment>
<comment type="cofactor">
    <cofactor evidence="1">
        <name>[4Fe-4S] cluster</name>
        <dbReference type="ChEBI" id="CHEBI:49883"/>
    </cofactor>
    <text evidence="1">Binds 1 [4Fe-4S] cluster per subunit.</text>
</comment>
<comment type="pathway">
    <text evidence="1">Sulfur metabolism; hydrogen sulfide biosynthesis; sulfite from sulfate.</text>
</comment>
<comment type="subcellular location">
    <subcellularLocation>
        <location evidence="1">Cytoplasm</location>
    </subcellularLocation>
</comment>
<comment type="similarity">
    <text evidence="1">Belongs to the PAPS reductase family. CysH subfamily.</text>
</comment>
<reference key="1">
    <citation type="submission" date="2005-03" db="EMBL/GenBank/DDBJ databases">
        <title>Comparison of the complete genome sequences of Rhodococcus erythropolis PR4 and Rhodococcus opacus B4.</title>
        <authorList>
            <person name="Takarada H."/>
            <person name="Sekine M."/>
            <person name="Hosoyama A."/>
            <person name="Yamada R."/>
            <person name="Fujisawa T."/>
            <person name="Omata S."/>
            <person name="Shimizu A."/>
            <person name="Tsukatani N."/>
            <person name="Tanikawa S."/>
            <person name="Fujita N."/>
            <person name="Harayama S."/>
        </authorList>
    </citation>
    <scope>NUCLEOTIDE SEQUENCE [LARGE SCALE GENOMIC DNA]</scope>
    <source>
        <strain>PR4 / NBRC 100887</strain>
    </source>
</reference>
<feature type="chain" id="PRO_1000202398" description="Adenosine 5'-phosphosulfate reductase">
    <location>
        <begin position="1"/>
        <end position="247"/>
    </location>
</feature>
<feature type="region of interest" description="Disordered" evidence="2">
    <location>
        <begin position="222"/>
        <end position="247"/>
    </location>
</feature>
<feature type="active site" description="Nucleophile; cysteine thiosulfonate intermediate" evidence="1">
    <location>
        <position position="242"/>
    </location>
</feature>
<feature type="binding site" evidence="1">
    <location>
        <position position="133"/>
    </location>
    <ligand>
        <name>[4Fe-4S] cluster</name>
        <dbReference type="ChEBI" id="CHEBI:49883"/>
    </ligand>
</feature>
<feature type="binding site" evidence="1">
    <location>
        <position position="134"/>
    </location>
    <ligand>
        <name>[4Fe-4S] cluster</name>
        <dbReference type="ChEBI" id="CHEBI:49883"/>
    </ligand>
</feature>
<feature type="binding site" evidence="1">
    <location>
        <position position="216"/>
    </location>
    <ligand>
        <name>[4Fe-4S] cluster</name>
        <dbReference type="ChEBI" id="CHEBI:49883"/>
    </ligand>
</feature>
<feature type="binding site" evidence="1">
    <location>
        <position position="219"/>
    </location>
    <ligand>
        <name>[4Fe-4S] cluster</name>
        <dbReference type="ChEBI" id="CHEBI:49883"/>
    </ligand>
</feature>
<keyword id="KW-0963">Cytoplasm</keyword>
<keyword id="KW-0408">Iron</keyword>
<keyword id="KW-0411">Iron-sulfur</keyword>
<keyword id="KW-0479">Metal-binding</keyword>
<keyword id="KW-0560">Oxidoreductase</keyword>
<evidence type="ECO:0000255" key="1">
    <source>
        <dbReference type="HAMAP-Rule" id="MF_00063"/>
    </source>
</evidence>
<evidence type="ECO:0000256" key="2">
    <source>
        <dbReference type="SAM" id="MobiDB-lite"/>
    </source>
</evidence>
<name>CYSH_RHOE4</name>
<gene>
    <name evidence="1" type="primary">cysH</name>
    <name type="ordered locus">RER_37470</name>
</gene>
<dbReference type="EC" id="1.8.4.10" evidence="1"/>
<dbReference type="EMBL" id="AP008957">
    <property type="protein sequence ID" value="BAH34455.1"/>
    <property type="molecule type" value="Genomic_DNA"/>
</dbReference>
<dbReference type="RefSeq" id="WP_020908198.1">
    <property type="nucleotide sequence ID" value="NC_012490.1"/>
</dbReference>
<dbReference type="SMR" id="C1A1H0"/>
<dbReference type="KEGG" id="rer:RER_37470"/>
<dbReference type="PATRIC" id="fig|234621.6.peg.4269"/>
<dbReference type="eggNOG" id="COG0175">
    <property type="taxonomic scope" value="Bacteria"/>
</dbReference>
<dbReference type="HOGENOM" id="CLU_044089_2_0_11"/>
<dbReference type="Proteomes" id="UP000002204">
    <property type="component" value="Chromosome"/>
</dbReference>
<dbReference type="GO" id="GO:0005737">
    <property type="term" value="C:cytoplasm"/>
    <property type="evidence" value="ECO:0007669"/>
    <property type="project" value="UniProtKB-SubCell"/>
</dbReference>
<dbReference type="GO" id="GO:0051539">
    <property type="term" value="F:4 iron, 4 sulfur cluster binding"/>
    <property type="evidence" value="ECO:0007669"/>
    <property type="project" value="UniProtKB-UniRule"/>
</dbReference>
<dbReference type="GO" id="GO:0043866">
    <property type="term" value="F:adenylyl-sulfate reductase (thioredoxin) activity"/>
    <property type="evidence" value="ECO:0007669"/>
    <property type="project" value="UniProtKB-EC"/>
</dbReference>
<dbReference type="GO" id="GO:0046872">
    <property type="term" value="F:metal ion binding"/>
    <property type="evidence" value="ECO:0007669"/>
    <property type="project" value="UniProtKB-KW"/>
</dbReference>
<dbReference type="GO" id="GO:0004604">
    <property type="term" value="F:phosphoadenylyl-sulfate reductase (thioredoxin) activity"/>
    <property type="evidence" value="ECO:0007669"/>
    <property type="project" value="UniProtKB-UniRule"/>
</dbReference>
<dbReference type="GO" id="GO:0019344">
    <property type="term" value="P:cysteine biosynthetic process"/>
    <property type="evidence" value="ECO:0007669"/>
    <property type="project" value="InterPro"/>
</dbReference>
<dbReference type="GO" id="GO:0070814">
    <property type="term" value="P:hydrogen sulfide biosynthetic process"/>
    <property type="evidence" value="ECO:0007669"/>
    <property type="project" value="UniProtKB-UniRule"/>
</dbReference>
<dbReference type="GO" id="GO:0019379">
    <property type="term" value="P:sulfate assimilation, phosphoadenylyl sulfate reduction by phosphoadenylyl-sulfate reductase (thioredoxin)"/>
    <property type="evidence" value="ECO:0007669"/>
    <property type="project" value="UniProtKB-UniRule"/>
</dbReference>
<dbReference type="CDD" id="cd23945">
    <property type="entry name" value="PAPS_reductase"/>
    <property type="match status" value="1"/>
</dbReference>
<dbReference type="Gene3D" id="3.40.50.620">
    <property type="entry name" value="HUPs"/>
    <property type="match status" value="1"/>
</dbReference>
<dbReference type="HAMAP" id="MF_00063">
    <property type="entry name" value="CysH"/>
    <property type="match status" value="1"/>
</dbReference>
<dbReference type="InterPro" id="IPR011798">
    <property type="entry name" value="APS_reductase"/>
</dbReference>
<dbReference type="InterPro" id="IPR004511">
    <property type="entry name" value="PAPS/APS_Rdtase"/>
</dbReference>
<dbReference type="InterPro" id="IPR002500">
    <property type="entry name" value="PAPS_reduct_dom"/>
</dbReference>
<dbReference type="InterPro" id="IPR014729">
    <property type="entry name" value="Rossmann-like_a/b/a_fold"/>
</dbReference>
<dbReference type="NCBIfam" id="TIGR02055">
    <property type="entry name" value="APS_reductase"/>
    <property type="match status" value="1"/>
</dbReference>
<dbReference type="NCBIfam" id="TIGR00434">
    <property type="entry name" value="cysH"/>
    <property type="match status" value="1"/>
</dbReference>
<dbReference type="NCBIfam" id="NF002537">
    <property type="entry name" value="PRK02090.1"/>
    <property type="match status" value="1"/>
</dbReference>
<dbReference type="PANTHER" id="PTHR46509">
    <property type="entry name" value="PHOSPHOADENOSINE PHOSPHOSULFATE REDUCTASE"/>
    <property type="match status" value="1"/>
</dbReference>
<dbReference type="PANTHER" id="PTHR46509:SF1">
    <property type="entry name" value="PHOSPHOADENOSINE PHOSPHOSULFATE REDUCTASE"/>
    <property type="match status" value="1"/>
</dbReference>
<dbReference type="Pfam" id="PF01507">
    <property type="entry name" value="PAPS_reduct"/>
    <property type="match status" value="1"/>
</dbReference>
<dbReference type="PIRSF" id="PIRSF000857">
    <property type="entry name" value="PAPS_reductase"/>
    <property type="match status" value="1"/>
</dbReference>
<dbReference type="SUPFAM" id="SSF52402">
    <property type="entry name" value="Adenine nucleotide alpha hydrolases-like"/>
    <property type="match status" value="1"/>
</dbReference>
<organism>
    <name type="scientific">Rhodococcus erythropolis (strain PR4 / NBRC 100887)</name>
    <dbReference type="NCBI Taxonomy" id="234621"/>
    <lineage>
        <taxon>Bacteria</taxon>
        <taxon>Bacillati</taxon>
        <taxon>Actinomycetota</taxon>
        <taxon>Actinomycetes</taxon>
        <taxon>Mycobacteriales</taxon>
        <taxon>Nocardiaceae</taxon>
        <taxon>Rhodococcus</taxon>
        <taxon>Rhodococcus erythropolis group</taxon>
    </lineage>
</organism>
<sequence>MTVDISRATADELRSIAERGAVELDGASAQELLQWTEDTFGDGASAATGDRNGYIVASNMQDGVLVHLAAQVHPGVDVLFLDTGYHFPETIGTRDAVEQVYGVNVINARALASVAEQDVAEGKDLFARDPNRCCALRKVAPLKQTLSGYSAWVTGIRRVEAPTRANAPLISFDEAFGLVKINPIAPWSDEEMQNYIDTNSILVNPLVDEGYPSIGCAPCTSKPAPGSDPRSGRWAGASKTECGLHAS</sequence>